<gene>
    <name evidence="1" type="primary">pyrB</name>
    <name type="ordered locus">Franean1_1706</name>
</gene>
<comment type="function">
    <text evidence="1">Catalyzes the condensation of carbamoyl phosphate and aspartate to form carbamoyl aspartate and inorganic phosphate, the committed step in the de novo pyrimidine nucleotide biosynthesis pathway.</text>
</comment>
<comment type="catalytic activity">
    <reaction evidence="1">
        <text>carbamoyl phosphate + L-aspartate = N-carbamoyl-L-aspartate + phosphate + H(+)</text>
        <dbReference type="Rhea" id="RHEA:20013"/>
        <dbReference type="ChEBI" id="CHEBI:15378"/>
        <dbReference type="ChEBI" id="CHEBI:29991"/>
        <dbReference type="ChEBI" id="CHEBI:32814"/>
        <dbReference type="ChEBI" id="CHEBI:43474"/>
        <dbReference type="ChEBI" id="CHEBI:58228"/>
        <dbReference type="EC" id="2.1.3.2"/>
    </reaction>
</comment>
<comment type="pathway">
    <text evidence="1">Pyrimidine metabolism; UMP biosynthesis via de novo pathway; (S)-dihydroorotate from bicarbonate: step 2/3.</text>
</comment>
<comment type="subunit">
    <text evidence="1">Heterododecamer (2C3:3R2) of six catalytic PyrB chains organized as two trimers (C3), and six regulatory PyrI chains organized as three dimers (R2).</text>
</comment>
<comment type="similarity">
    <text evidence="1">Belongs to the aspartate/ornithine carbamoyltransferase superfamily. ATCase family.</text>
</comment>
<proteinExistence type="inferred from homology"/>
<reference key="1">
    <citation type="journal article" date="2007" name="Genome Res.">
        <title>Genome characteristics of facultatively symbiotic Frankia sp. strains reflect host range and host plant biogeography.</title>
        <authorList>
            <person name="Normand P."/>
            <person name="Lapierre P."/>
            <person name="Tisa L.S."/>
            <person name="Gogarten J.P."/>
            <person name="Alloisio N."/>
            <person name="Bagnarol E."/>
            <person name="Bassi C.A."/>
            <person name="Berry A.M."/>
            <person name="Bickhart D.M."/>
            <person name="Choisne N."/>
            <person name="Couloux A."/>
            <person name="Cournoyer B."/>
            <person name="Cruveiller S."/>
            <person name="Daubin V."/>
            <person name="Demange N."/>
            <person name="Francino M.P."/>
            <person name="Goltsman E."/>
            <person name="Huang Y."/>
            <person name="Kopp O.R."/>
            <person name="Labarre L."/>
            <person name="Lapidus A."/>
            <person name="Lavire C."/>
            <person name="Marechal J."/>
            <person name="Martinez M."/>
            <person name="Mastronunzio J.E."/>
            <person name="Mullin B.C."/>
            <person name="Niemann J."/>
            <person name="Pujic P."/>
            <person name="Rawnsley T."/>
            <person name="Rouy Z."/>
            <person name="Schenowitz C."/>
            <person name="Sellstedt A."/>
            <person name="Tavares F."/>
            <person name="Tomkins J.P."/>
            <person name="Vallenet D."/>
            <person name="Valverde C."/>
            <person name="Wall L.G."/>
            <person name="Wang Y."/>
            <person name="Medigue C."/>
            <person name="Benson D.R."/>
        </authorList>
    </citation>
    <scope>NUCLEOTIDE SEQUENCE [LARGE SCALE GENOMIC DNA]</scope>
    <source>
        <strain>EAN1pec</strain>
    </source>
</reference>
<feature type="chain" id="PRO_1000088764" description="Aspartate carbamoyltransferase catalytic subunit">
    <location>
        <begin position="1"/>
        <end position="309"/>
    </location>
</feature>
<feature type="binding site" evidence="1">
    <location>
        <position position="54"/>
    </location>
    <ligand>
        <name>carbamoyl phosphate</name>
        <dbReference type="ChEBI" id="CHEBI:58228"/>
    </ligand>
</feature>
<feature type="binding site" evidence="1">
    <location>
        <position position="55"/>
    </location>
    <ligand>
        <name>carbamoyl phosphate</name>
        <dbReference type="ChEBI" id="CHEBI:58228"/>
    </ligand>
</feature>
<feature type="binding site" evidence="1">
    <location>
        <position position="82"/>
    </location>
    <ligand>
        <name>L-aspartate</name>
        <dbReference type="ChEBI" id="CHEBI:29991"/>
    </ligand>
</feature>
<feature type="binding site" evidence="1">
    <location>
        <position position="104"/>
    </location>
    <ligand>
        <name>carbamoyl phosphate</name>
        <dbReference type="ChEBI" id="CHEBI:58228"/>
    </ligand>
</feature>
<feature type="binding site" evidence="1">
    <location>
        <position position="132"/>
    </location>
    <ligand>
        <name>carbamoyl phosphate</name>
        <dbReference type="ChEBI" id="CHEBI:58228"/>
    </ligand>
</feature>
<feature type="binding site" evidence="1">
    <location>
        <position position="135"/>
    </location>
    <ligand>
        <name>carbamoyl phosphate</name>
        <dbReference type="ChEBI" id="CHEBI:58228"/>
    </ligand>
</feature>
<feature type="binding site" evidence="1">
    <location>
        <position position="165"/>
    </location>
    <ligand>
        <name>L-aspartate</name>
        <dbReference type="ChEBI" id="CHEBI:29991"/>
    </ligand>
</feature>
<feature type="binding site" evidence="1">
    <location>
        <position position="219"/>
    </location>
    <ligand>
        <name>L-aspartate</name>
        <dbReference type="ChEBI" id="CHEBI:29991"/>
    </ligand>
</feature>
<feature type="binding site" evidence="1">
    <location>
        <position position="260"/>
    </location>
    <ligand>
        <name>carbamoyl phosphate</name>
        <dbReference type="ChEBI" id="CHEBI:58228"/>
    </ligand>
</feature>
<feature type="binding site" evidence="1">
    <location>
        <position position="261"/>
    </location>
    <ligand>
        <name>carbamoyl phosphate</name>
        <dbReference type="ChEBI" id="CHEBI:58228"/>
    </ligand>
</feature>
<evidence type="ECO:0000255" key="1">
    <source>
        <dbReference type="HAMAP-Rule" id="MF_00001"/>
    </source>
</evidence>
<sequence length="309" mass="33388">MNHLLSTADLKLDDALLVLDTADRMARVADAPVRKLPTLRGRTVVNLFFEDSTRTRTSFEVAAKRLSADVINFSARGSSVSKGESLKDTAQTLEAMGADAVVCRHPASGAPHRLASWVRGSVVNAGDGTHEHPTQALLDAFTIRRRLGRLDGLAVTIVGDVLHSRVARSNVWLLTTLGARVTVVAPPTLLPLGISGWPVEVSYDLESVLPKSDVVMMLRVQRERMSAAFFPTEREYSRRYGLDADRAALMPEHALVMHPGPMVRGMEIASSVADSPRSTVVEQVANGVSVRMAVLYLLLGGSGAERESS</sequence>
<keyword id="KW-0665">Pyrimidine biosynthesis</keyword>
<keyword id="KW-0808">Transferase</keyword>
<protein>
    <recommendedName>
        <fullName evidence="1">Aspartate carbamoyltransferase catalytic subunit</fullName>
        <ecNumber evidence="1">2.1.3.2</ecNumber>
    </recommendedName>
    <alternativeName>
        <fullName evidence="1">Aspartate transcarbamylase</fullName>
        <shortName evidence="1">ATCase</shortName>
    </alternativeName>
</protein>
<name>PYRB_PARS2</name>
<organism>
    <name type="scientific">Parafrankia sp. (strain EAN1pec)</name>
    <dbReference type="NCBI Taxonomy" id="298653"/>
    <lineage>
        <taxon>Bacteria</taxon>
        <taxon>Bacillati</taxon>
        <taxon>Actinomycetota</taxon>
        <taxon>Actinomycetes</taxon>
        <taxon>Frankiales</taxon>
        <taxon>Frankiaceae</taxon>
        <taxon>Parafrankia</taxon>
    </lineage>
</organism>
<dbReference type="EC" id="2.1.3.2" evidence="1"/>
<dbReference type="EMBL" id="CP000820">
    <property type="protein sequence ID" value="ABW11144.1"/>
    <property type="molecule type" value="Genomic_DNA"/>
</dbReference>
<dbReference type="RefSeq" id="WP_020459316.1">
    <property type="nucleotide sequence ID" value="NC_009921.1"/>
</dbReference>
<dbReference type="SMR" id="A8LE09"/>
<dbReference type="STRING" id="298653.Franean1_1706"/>
<dbReference type="KEGG" id="fre:Franean1_1706"/>
<dbReference type="eggNOG" id="COG0540">
    <property type="taxonomic scope" value="Bacteria"/>
</dbReference>
<dbReference type="HOGENOM" id="CLU_043846_2_0_11"/>
<dbReference type="UniPathway" id="UPA00070">
    <property type="reaction ID" value="UER00116"/>
</dbReference>
<dbReference type="GO" id="GO:0005829">
    <property type="term" value="C:cytosol"/>
    <property type="evidence" value="ECO:0007669"/>
    <property type="project" value="TreeGrafter"/>
</dbReference>
<dbReference type="GO" id="GO:0016597">
    <property type="term" value="F:amino acid binding"/>
    <property type="evidence" value="ECO:0007669"/>
    <property type="project" value="InterPro"/>
</dbReference>
<dbReference type="GO" id="GO:0004070">
    <property type="term" value="F:aspartate carbamoyltransferase activity"/>
    <property type="evidence" value="ECO:0007669"/>
    <property type="project" value="UniProtKB-UniRule"/>
</dbReference>
<dbReference type="GO" id="GO:0006207">
    <property type="term" value="P:'de novo' pyrimidine nucleobase biosynthetic process"/>
    <property type="evidence" value="ECO:0007669"/>
    <property type="project" value="InterPro"/>
</dbReference>
<dbReference type="GO" id="GO:0044205">
    <property type="term" value="P:'de novo' UMP biosynthetic process"/>
    <property type="evidence" value="ECO:0007669"/>
    <property type="project" value="UniProtKB-UniRule"/>
</dbReference>
<dbReference type="GO" id="GO:0006520">
    <property type="term" value="P:amino acid metabolic process"/>
    <property type="evidence" value="ECO:0007669"/>
    <property type="project" value="InterPro"/>
</dbReference>
<dbReference type="FunFam" id="3.40.50.1370:FF:000007">
    <property type="entry name" value="Aspartate carbamoyltransferase"/>
    <property type="match status" value="1"/>
</dbReference>
<dbReference type="FunFam" id="3.40.50.1370:FF:000012">
    <property type="entry name" value="Aspartate carbamoyltransferase"/>
    <property type="match status" value="1"/>
</dbReference>
<dbReference type="Gene3D" id="3.40.50.1370">
    <property type="entry name" value="Aspartate/ornithine carbamoyltransferase"/>
    <property type="match status" value="2"/>
</dbReference>
<dbReference type="HAMAP" id="MF_00001">
    <property type="entry name" value="Asp_carb_tr"/>
    <property type="match status" value="1"/>
</dbReference>
<dbReference type="InterPro" id="IPR006132">
    <property type="entry name" value="Asp/Orn_carbamoyltranf_P-bd"/>
</dbReference>
<dbReference type="InterPro" id="IPR006130">
    <property type="entry name" value="Asp/Orn_carbamoylTrfase"/>
</dbReference>
<dbReference type="InterPro" id="IPR036901">
    <property type="entry name" value="Asp/Orn_carbamoylTrfase_sf"/>
</dbReference>
<dbReference type="InterPro" id="IPR002082">
    <property type="entry name" value="Asp_carbamoyltransf"/>
</dbReference>
<dbReference type="InterPro" id="IPR006131">
    <property type="entry name" value="Asp_carbamoyltransf_Asp/Orn-bd"/>
</dbReference>
<dbReference type="NCBIfam" id="TIGR00670">
    <property type="entry name" value="asp_carb_tr"/>
    <property type="match status" value="1"/>
</dbReference>
<dbReference type="NCBIfam" id="NF002032">
    <property type="entry name" value="PRK00856.1"/>
    <property type="match status" value="1"/>
</dbReference>
<dbReference type="PANTHER" id="PTHR45753:SF6">
    <property type="entry name" value="ASPARTATE CARBAMOYLTRANSFERASE"/>
    <property type="match status" value="1"/>
</dbReference>
<dbReference type="PANTHER" id="PTHR45753">
    <property type="entry name" value="ORNITHINE CARBAMOYLTRANSFERASE, MITOCHONDRIAL"/>
    <property type="match status" value="1"/>
</dbReference>
<dbReference type="Pfam" id="PF00185">
    <property type="entry name" value="OTCace"/>
    <property type="match status" value="1"/>
</dbReference>
<dbReference type="Pfam" id="PF02729">
    <property type="entry name" value="OTCace_N"/>
    <property type="match status" value="1"/>
</dbReference>
<dbReference type="PRINTS" id="PR00100">
    <property type="entry name" value="AOTCASE"/>
</dbReference>
<dbReference type="PRINTS" id="PR00101">
    <property type="entry name" value="ATCASE"/>
</dbReference>
<dbReference type="SUPFAM" id="SSF53671">
    <property type="entry name" value="Aspartate/ornithine carbamoyltransferase"/>
    <property type="match status" value="1"/>
</dbReference>
<dbReference type="PROSITE" id="PS00097">
    <property type="entry name" value="CARBAMOYLTRANSFERASE"/>
    <property type="match status" value="1"/>
</dbReference>
<accession>A8LE09</accession>